<name>TM258_XENLA</name>
<accession>Q6GP81</accession>
<organism>
    <name type="scientific">Xenopus laevis</name>
    <name type="common">African clawed frog</name>
    <dbReference type="NCBI Taxonomy" id="8355"/>
    <lineage>
        <taxon>Eukaryota</taxon>
        <taxon>Metazoa</taxon>
        <taxon>Chordata</taxon>
        <taxon>Craniata</taxon>
        <taxon>Vertebrata</taxon>
        <taxon>Euteleostomi</taxon>
        <taxon>Amphibia</taxon>
        <taxon>Batrachia</taxon>
        <taxon>Anura</taxon>
        <taxon>Pipoidea</taxon>
        <taxon>Pipidae</taxon>
        <taxon>Xenopodinae</taxon>
        <taxon>Xenopus</taxon>
        <taxon>Xenopus</taxon>
    </lineage>
</organism>
<proteinExistence type="inferred from homology"/>
<feature type="chain" id="PRO_0000235834" description="Dolichyl-diphosphooligosaccharide--protein glycosyltransferase subunit TMEM258">
    <location>
        <begin position="1"/>
        <end position="79"/>
    </location>
</feature>
<feature type="transmembrane region" description="Helical" evidence="2">
    <location>
        <begin position="17"/>
        <end position="37"/>
    </location>
</feature>
<feature type="transmembrane region" description="Helical" evidence="2">
    <location>
        <begin position="55"/>
        <end position="75"/>
    </location>
</feature>
<keyword id="KW-0963">Cytoplasm</keyword>
<keyword id="KW-0256">Endoplasmic reticulum</keyword>
<keyword id="KW-0472">Membrane</keyword>
<keyword id="KW-1185">Reference proteome</keyword>
<keyword id="KW-0812">Transmembrane</keyword>
<keyword id="KW-1133">Transmembrane helix</keyword>
<sequence length="79" mass="9065">MELEAMSRYTSPVNPAVFPHLTVVLLAIGMFFTAWFFVYEVTSTKYTRDVYKELLISLVASLFMGFGVLFLLLWVGIYV</sequence>
<reference key="1">
    <citation type="submission" date="2004-06" db="EMBL/GenBank/DDBJ databases">
        <authorList>
            <consortium name="NIH - Xenopus Gene Collection (XGC) project"/>
        </authorList>
    </citation>
    <scope>NUCLEOTIDE SEQUENCE [LARGE SCALE MRNA]</scope>
    <source>
        <tissue>Spleen</tissue>
    </source>
</reference>
<comment type="function">
    <text evidence="1">Subunit of the oligosaccharyl transferase (OST) complex that catalyzes the initial transfer of a defined glycan (Glc(3)Man(9)GlcNAc(2) in eukaryotes) from the lipid carrier dolichol-pyrophosphate to an asparagine residue within an Asn-X-Ser/Thr consensus motif in nascent polypeptide chains, the first step in protein N-glycosylation. N-glycosylation occurs cotranslationally and the complex associates with the Sec61 complex at the channel-forming translocon complex that mediates protein translocation across the endoplasmic reticulum (ER). All subunits are required for a maximal enzyme activity.</text>
</comment>
<comment type="pathway">
    <text evidence="1">Protein modification; protein glycosylation.</text>
</comment>
<comment type="subunit">
    <text evidence="1">Component of the oligosaccharyltransferase (OST) complex.</text>
</comment>
<comment type="subcellular location">
    <subcellularLocation>
        <location evidence="1">Membrane</location>
        <topology evidence="1">Multi-pass membrane protein</topology>
    </subcellularLocation>
    <subcellularLocation>
        <location evidence="1">Endoplasmic reticulum</location>
    </subcellularLocation>
    <subcellularLocation>
        <location evidence="1">Cytoplasm</location>
    </subcellularLocation>
</comment>
<comment type="similarity">
    <text evidence="3">Belongs to the OST5 family.</text>
</comment>
<evidence type="ECO:0000250" key="1">
    <source>
        <dbReference type="UniProtKB" id="P61165"/>
    </source>
</evidence>
<evidence type="ECO:0000255" key="2"/>
<evidence type="ECO:0000305" key="3"/>
<gene>
    <name evidence="1" type="primary">tmem258</name>
</gene>
<protein>
    <recommendedName>
        <fullName>Dolichyl-diphosphooligosaccharide--protein glycosyltransferase subunit TMEM258</fullName>
        <shortName>Oligosaccharyl transferase subunit TMEM258</shortName>
    </recommendedName>
    <alternativeName>
        <fullName evidence="1">Transmembrane protein 258</fullName>
    </alternativeName>
</protein>
<dbReference type="EMBL" id="BC073260">
    <property type="protein sequence ID" value="AAH73260.1"/>
    <property type="molecule type" value="mRNA"/>
</dbReference>
<dbReference type="RefSeq" id="NP_001085730.1">
    <property type="nucleotide sequence ID" value="NM_001092261.2"/>
</dbReference>
<dbReference type="SMR" id="Q6GP81"/>
<dbReference type="DNASU" id="444157"/>
<dbReference type="GeneID" id="444157"/>
<dbReference type="KEGG" id="xla:444157"/>
<dbReference type="AGR" id="Xenbase:XB-GENE-1005566"/>
<dbReference type="CTD" id="444157"/>
<dbReference type="Xenbase" id="XB-GENE-1005566">
    <property type="gene designation" value="tmem258.L"/>
</dbReference>
<dbReference type="OMA" id="MERYVGP"/>
<dbReference type="OrthoDB" id="18408at2759"/>
<dbReference type="UniPathway" id="UPA00378"/>
<dbReference type="Proteomes" id="UP000186698">
    <property type="component" value="Chromosome 4L"/>
</dbReference>
<dbReference type="Bgee" id="444157">
    <property type="expression patterns" value="Expressed in internal ear and 19 other cell types or tissues"/>
</dbReference>
<dbReference type="GO" id="GO:0005737">
    <property type="term" value="C:cytoplasm"/>
    <property type="evidence" value="ECO:0000250"/>
    <property type="project" value="UniProtKB"/>
</dbReference>
<dbReference type="GO" id="GO:0005789">
    <property type="term" value="C:endoplasmic reticulum membrane"/>
    <property type="evidence" value="ECO:0000318"/>
    <property type="project" value="GO_Central"/>
</dbReference>
<dbReference type="GO" id="GO:0016020">
    <property type="term" value="C:membrane"/>
    <property type="evidence" value="ECO:0000250"/>
    <property type="project" value="UniProtKB"/>
</dbReference>
<dbReference type="GO" id="GO:0008250">
    <property type="term" value="C:oligosaccharyltransferase complex"/>
    <property type="evidence" value="ECO:0007669"/>
    <property type="project" value="InterPro"/>
</dbReference>
<dbReference type="GO" id="GO:0062062">
    <property type="term" value="F:oligosaccharyltransferase complex binding"/>
    <property type="evidence" value="ECO:0000318"/>
    <property type="project" value="GO_Central"/>
</dbReference>
<dbReference type="GO" id="GO:0006486">
    <property type="term" value="P:protein glycosylation"/>
    <property type="evidence" value="ECO:0007669"/>
    <property type="project" value="UniProtKB-UniPathway"/>
</dbReference>
<dbReference type="GO" id="GO:0034976">
    <property type="term" value="P:response to endoplasmic reticulum stress"/>
    <property type="evidence" value="ECO:0000318"/>
    <property type="project" value="GO_Central"/>
</dbReference>
<dbReference type="InterPro" id="IPR007915">
    <property type="entry name" value="TMEM258/Ost5"/>
</dbReference>
<dbReference type="PANTHER" id="PTHR13636">
    <property type="entry name" value="TRANSMEMBRANE PROTEIN 258"/>
    <property type="match status" value="1"/>
</dbReference>
<dbReference type="Pfam" id="PF05251">
    <property type="entry name" value="Ost5"/>
    <property type="match status" value="1"/>
</dbReference>